<gene>
    <name evidence="1" type="primary">trmFO</name>
    <name type="ordered locus">CHY_1793</name>
</gene>
<reference key="1">
    <citation type="journal article" date="2005" name="PLoS Genet.">
        <title>Life in hot carbon monoxide: the complete genome sequence of Carboxydothermus hydrogenoformans Z-2901.</title>
        <authorList>
            <person name="Wu M."/>
            <person name="Ren Q."/>
            <person name="Durkin A.S."/>
            <person name="Daugherty S.C."/>
            <person name="Brinkac L.M."/>
            <person name="Dodson R.J."/>
            <person name="Madupu R."/>
            <person name="Sullivan S.A."/>
            <person name="Kolonay J.F."/>
            <person name="Nelson W.C."/>
            <person name="Tallon L.J."/>
            <person name="Jones K.M."/>
            <person name="Ulrich L.E."/>
            <person name="Gonzalez J.M."/>
            <person name="Zhulin I.B."/>
            <person name="Robb F.T."/>
            <person name="Eisen J.A."/>
        </authorList>
    </citation>
    <scope>NUCLEOTIDE SEQUENCE [LARGE SCALE GENOMIC DNA]</scope>
    <source>
        <strain>ATCC BAA-161 / DSM 6008 / Z-2901</strain>
    </source>
</reference>
<organism>
    <name type="scientific">Carboxydothermus hydrogenoformans (strain ATCC BAA-161 / DSM 6008 / Z-2901)</name>
    <dbReference type="NCBI Taxonomy" id="246194"/>
    <lineage>
        <taxon>Bacteria</taxon>
        <taxon>Bacillati</taxon>
        <taxon>Bacillota</taxon>
        <taxon>Clostridia</taxon>
        <taxon>Thermoanaerobacterales</taxon>
        <taxon>Thermoanaerobacteraceae</taxon>
        <taxon>Carboxydothermus</taxon>
    </lineage>
</organism>
<protein>
    <recommendedName>
        <fullName evidence="1">Methylenetetrahydrofolate--tRNA-(uracil-5-)-methyltransferase TrmFO</fullName>
        <ecNumber evidence="1">2.1.1.74</ecNumber>
    </recommendedName>
    <alternativeName>
        <fullName evidence="1">Folate-dependent tRNA (uracil-5-)-methyltransferase</fullName>
    </alternativeName>
    <alternativeName>
        <fullName evidence="1">Folate-dependent tRNA(M-5-U54)-methyltransferase</fullName>
    </alternativeName>
</protein>
<keyword id="KW-0963">Cytoplasm</keyword>
<keyword id="KW-0274">FAD</keyword>
<keyword id="KW-0285">Flavoprotein</keyword>
<keyword id="KW-0489">Methyltransferase</keyword>
<keyword id="KW-0520">NAD</keyword>
<keyword id="KW-0521">NADP</keyword>
<keyword id="KW-1185">Reference proteome</keyword>
<keyword id="KW-0808">Transferase</keyword>
<keyword id="KW-0819">tRNA processing</keyword>
<name>TRMFO_CARHZ</name>
<accession>Q3AB71</accession>
<comment type="function">
    <text evidence="1">Catalyzes the folate-dependent formation of 5-methyl-uridine at position 54 (M-5-U54) in all tRNAs.</text>
</comment>
<comment type="catalytic activity">
    <reaction evidence="1">
        <text>uridine(54) in tRNA + (6R)-5,10-methylene-5,6,7,8-tetrahydrofolate + NADH + H(+) = 5-methyluridine(54) in tRNA + (6S)-5,6,7,8-tetrahydrofolate + NAD(+)</text>
        <dbReference type="Rhea" id="RHEA:16873"/>
        <dbReference type="Rhea" id="RHEA-COMP:10167"/>
        <dbReference type="Rhea" id="RHEA-COMP:10193"/>
        <dbReference type="ChEBI" id="CHEBI:15378"/>
        <dbReference type="ChEBI" id="CHEBI:15636"/>
        <dbReference type="ChEBI" id="CHEBI:57453"/>
        <dbReference type="ChEBI" id="CHEBI:57540"/>
        <dbReference type="ChEBI" id="CHEBI:57945"/>
        <dbReference type="ChEBI" id="CHEBI:65315"/>
        <dbReference type="ChEBI" id="CHEBI:74447"/>
        <dbReference type="EC" id="2.1.1.74"/>
    </reaction>
</comment>
<comment type="catalytic activity">
    <reaction evidence="1">
        <text>uridine(54) in tRNA + (6R)-5,10-methylene-5,6,7,8-tetrahydrofolate + NADPH + H(+) = 5-methyluridine(54) in tRNA + (6S)-5,6,7,8-tetrahydrofolate + NADP(+)</text>
        <dbReference type="Rhea" id="RHEA:62372"/>
        <dbReference type="Rhea" id="RHEA-COMP:10167"/>
        <dbReference type="Rhea" id="RHEA-COMP:10193"/>
        <dbReference type="ChEBI" id="CHEBI:15378"/>
        <dbReference type="ChEBI" id="CHEBI:15636"/>
        <dbReference type="ChEBI" id="CHEBI:57453"/>
        <dbReference type="ChEBI" id="CHEBI:57783"/>
        <dbReference type="ChEBI" id="CHEBI:58349"/>
        <dbReference type="ChEBI" id="CHEBI:65315"/>
        <dbReference type="ChEBI" id="CHEBI:74447"/>
        <dbReference type="EC" id="2.1.1.74"/>
    </reaction>
</comment>
<comment type="cofactor">
    <cofactor evidence="1">
        <name>FAD</name>
        <dbReference type="ChEBI" id="CHEBI:57692"/>
    </cofactor>
</comment>
<comment type="subcellular location">
    <subcellularLocation>
        <location evidence="1">Cytoplasm</location>
    </subcellularLocation>
</comment>
<comment type="similarity">
    <text evidence="1">Belongs to the MnmG family. TrmFO subfamily.</text>
</comment>
<evidence type="ECO:0000255" key="1">
    <source>
        <dbReference type="HAMAP-Rule" id="MF_01037"/>
    </source>
</evidence>
<feature type="chain" id="PRO_0000346328" description="Methylenetetrahydrofolate--tRNA-(uracil-5-)-methyltransferase TrmFO">
    <location>
        <begin position="1"/>
        <end position="433"/>
    </location>
</feature>
<feature type="binding site" evidence="1">
    <location>
        <begin position="8"/>
        <end position="13"/>
    </location>
    <ligand>
        <name>FAD</name>
        <dbReference type="ChEBI" id="CHEBI:57692"/>
    </ligand>
</feature>
<proteinExistence type="inferred from homology"/>
<dbReference type="EC" id="2.1.1.74" evidence="1"/>
<dbReference type="EMBL" id="CP000141">
    <property type="protein sequence ID" value="ABB15966.1"/>
    <property type="molecule type" value="Genomic_DNA"/>
</dbReference>
<dbReference type="RefSeq" id="WP_011344687.1">
    <property type="nucleotide sequence ID" value="NC_007503.1"/>
</dbReference>
<dbReference type="SMR" id="Q3AB71"/>
<dbReference type="FunCoup" id="Q3AB71">
    <property type="interactions" value="13"/>
</dbReference>
<dbReference type="STRING" id="246194.CHY_1793"/>
<dbReference type="KEGG" id="chy:CHY_1793"/>
<dbReference type="eggNOG" id="COG1206">
    <property type="taxonomic scope" value="Bacteria"/>
</dbReference>
<dbReference type="HOGENOM" id="CLU_033057_1_0_9"/>
<dbReference type="InParanoid" id="Q3AB71"/>
<dbReference type="OrthoDB" id="9803114at2"/>
<dbReference type="Proteomes" id="UP000002706">
    <property type="component" value="Chromosome"/>
</dbReference>
<dbReference type="GO" id="GO:0005829">
    <property type="term" value="C:cytosol"/>
    <property type="evidence" value="ECO:0007669"/>
    <property type="project" value="TreeGrafter"/>
</dbReference>
<dbReference type="GO" id="GO:0050660">
    <property type="term" value="F:flavin adenine dinucleotide binding"/>
    <property type="evidence" value="ECO:0007669"/>
    <property type="project" value="UniProtKB-UniRule"/>
</dbReference>
<dbReference type="GO" id="GO:0047151">
    <property type="term" value="F:tRNA (uracil(54)-C5)-methyltransferase activity, 5,10-methylenetetrahydrofolate-dependent"/>
    <property type="evidence" value="ECO:0007669"/>
    <property type="project" value="UniProtKB-UniRule"/>
</dbReference>
<dbReference type="GO" id="GO:0030488">
    <property type="term" value="P:tRNA methylation"/>
    <property type="evidence" value="ECO:0007669"/>
    <property type="project" value="TreeGrafter"/>
</dbReference>
<dbReference type="GO" id="GO:0002098">
    <property type="term" value="P:tRNA wobble uridine modification"/>
    <property type="evidence" value="ECO:0007669"/>
    <property type="project" value="TreeGrafter"/>
</dbReference>
<dbReference type="Gene3D" id="3.50.50.60">
    <property type="entry name" value="FAD/NAD(P)-binding domain"/>
    <property type="match status" value="2"/>
</dbReference>
<dbReference type="HAMAP" id="MF_01037">
    <property type="entry name" value="TrmFO"/>
    <property type="match status" value="1"/>
</dbReference>
<dbReference type="InterPro" id="IPR036188">
    <property type="entry name" value="FAD/NAD-bd_sf"/>
</dbReference>
<dbReference type="InterPro" id="IPR002218">
    <property type="entry name" value="MnmG-rel"/>
</dbReference>
<dbReference type="InterPro" id="IPR040131">
    <property type="entry name" value="MnmG_N"/>
</dbReference>
<dbReference type="InterPro" id="IPR004417">
    <property type="entry name" value="TrmFO"/>
</dbReference>
<dbReference type="NCBIfam" id="TIGR00137">
    <property type="entry name" value="gid_trmFO"/>
    <property type="match status" value="1"/>
</dbReference>
<dbReference type="NCBIfam" id="NF003739">
    <property type="entry name" value="PRK05335.1"/>
    <property type="match status" value="1"/>
</dbReference>
<dbReference type="PANTHER" id="PTHR11806">
    <property type="entry name" value="GLUCOSE INHIBITED DIVISION PROTEIN A"/>
    <property type="match status" value="1"/>
</dbReference>
<dbReference type="PANTHER" id="PTHR11806:SF2">
    <property type="entry name" value="METHYLENETETRAHYDROFOLATE--TRNA-(URACIL-5-)-METHYLTRANSFERASE TRMFO"/>
    <property type="match status" value="1"/>
</dbReference>
<dbReference type="Pfam" id="PF01134">
    <property type="entry name" value="GIDA"/>
    <property type="match status" value="1"/>
</dbReference>
<dbReference type="SUPFAM" id="SSF51905">
    <property type="entry name" value="FAD/NAD(P)-binding domain"/>
    <property type="match status" value="1"/>
</dbReference>
<sequence length="433" mass="48653">MKEVDVVGAGLAGAEAAWQLAKRGIKVRLFEMRPKKFTPAHQTPLFAELVCSNSLGGINLDNAAGLLKEELRFLDSLVIKVADRNRIPAGNALAVDRNLFAEEVTLRLSHHPLIEVIREEVVDINPERVTVIASGPLTSKALAENLKKYLESDYLYFFDAVAPIVAGESLDMEKLFFAGRYQQDKDYLNAPMNEEEYLRFYEALITAERHPLKPFEKDIYYEGCLPIEVIASRGKDTLRFGPLKPKGIIDPRTGKEPYAVVQLRRENLAGDYYNLVGFQTNLTWKEQNRVFRLIPGLENAEFIRFGVMHKNTFINSPALLTPYLNLKKYPRLFFAGQITGGEGYVAAIATGAWAGIAASGMFGKMPEPLPETTMLGGLIRYLNTAPVENFQPMGVNFGLVKPLDRKIKNKKERYKLLAERSLKDLKRWLAVNG</sequence>